<feature type="initiator methionine" description="Removed" evidence="10">
    <location>
        <position position="1"/>
    </location>
</feature>
<feature type="chain" id="PRO_0000203474" description="M-phase phosphoprotein 6 homolog">
    <location>
        <begin position="2"/>
        <end position="186"/>
    </location>
</feature>
<feature type="region of interest" description="Disordered" evidence="2">
    <location>
        <begin position="22"/>
        <end position="47"/>
    </location>
</feature>
<feature type="region of interest" description="Disordered" evidence="2">
    <location>
        <begin position="95"/>
        <end position="186"/>
    </location>
</feature>
<feature type="compositionally biased region" description="Low complexity" evidence="2">
    <location>
        <begin position="32"/>
        <end position="42"/>
    </location>
</feature>
<feature type="compositionally biased region" description="Basic and acidic residues" evidence="2">
    <location>
        <begin position="122"/>
        <end position="147"/>
    </location>
</feature>
<feature type="compositionally biased region" description="Basic residues" evidence="2">
    <location>
        <begin position="168"/>
        <end position="186"/>
    </location>
</feature>
<feature type="modified residue" description="N-acetylserine" evidence="10">
    <location>
        <position position="2"/>
    </location>
</feature>
<feature type="modified residue" description="Phosphoserine" evidence="9">
    <location>
        <position position="42"/>
    </location>
</feature>
<feature type="modified residue" description="Phosphoserine" evidence="9">
    <location>
        <position position="150"/>
    </location>
</feature>
<feature type="strand" evidence="12">
    <location>
        <begin position="103"/>
        <end position="105"/>
    </location>
</feature>
<feature type="strand" evidence="11">
    <location>
        <begin position="111"/>
        <end position="114"/>
    </location>
</feature>
<evidence type="ECO:0000250" key="1">
    <source>
        <dbReference type="UniProtKB" id="Q99547"/>
    </source>
</evidence>
<evidence type="ECO:0000256" key="2">
    <source>
        <dbReference type="SAM" id="MobiDB-lite"/>
    </source>
</evidence>
<evidence type="ECO:0000269" key="3">
    <source>
    </source>
</evidence>
<evidence type="ECO:0000269" key="4">
    <source>
    </source>
</evidence>
<evidence type="ECO:0000269" key="5">
    <source>
    </source>
</evidence>
<evidence type="ECO:0000269" key="6">
    <source>
    </source>
</evidence>
<evidence type="ECO:0000269" key="7">
    <source>
    </source>
</evidence>
<evidence type="ECO:0000305" key="8"/>
<evidence type="ECO:0007744" key="9">
    <source>
    </source>
</evidence>
<evidence type="ECO:0007744" key="10">
    <source>
    </source>
</evidence>
<evidence type="ECO:0007829" key="11">
    <source>
        <dbReference type="PDB" id="5OKZ"/>
    </source>
</evidence>
<evidence type="ECO:0007829" key="12">
    <source>
        <dbReference type="PDB" id="5VZJ"/>
    </source>
</evidence>
<sequence>MSANNGVTGKLSSRVMNMKFMKFGKTDDEESSNSNTPSNINSDVEPIEQKGKLFGLDDSAWDLNSYKDDLKKISGKEKKKVKRVVYKKRPNLIISNVGYSELRKPEGVISGRKTFGDNSDDSGSRKRKFDEGEQNEDEKRDAKDKEFTGSQDDGEDEYDLDKLFKDSIKKKKTNHNGKNKNRNSKK</sequence>
<name>MPP6_YEAST</name>
<organism>
    <name type="scientific">Saccharomyces cerevisiae (strain ATCC 204508 / S288c)</name>
    <name type="common">Baker's yeast</name>
    <dbReference type="NCBI Taxonomy" id="559292"/>
    <lineage>
        <taxon>Eukaryota</taxon>
        <taxon>Fungi</taxon>
        <taxon>Dikarya</taxon>
        <taxon>Ascomycota</taxon>
        <taxon>Saccharomycotina</taxon>
        <taxon>Saccharomycetes</taxon>
        <taxon>Saccharomycetales</taxon>
        <taxon>Saccharomycetaceae</taxon>
        <taxon>Saccharomyces</taxon>
    </lineage>
</organism>
<keyword id="KW-0002">3D-structure</keyword>
<keyword id="KW-0007">Acetylation</keyword>
<keyword id="KW-0539">Nucleus</keyword>
<keyword id="KW-0597">Phosphoprotein</keyword>
<keyword id="KW-1185">Reference proteome</keyword>
<keyword id="KW-0694">RNA-binding</keyword>
<keyword id="KW-0698">rRNA processing</keyword>
<dbReference type="EMBL" id="Z71639">
    <property type="protein sequence ID" value="CAA96303.1"/>
    <property type="molecule type" value="Genomic_DNA"/>
</dbReference>
<dbReference type="EMBL" id="BK006947">
    <property type="protein sequence ID" value="DAA10565.1"/>
    <property type="molecule type" value="Genomic_DNA"/>
</dbReference>
<dbReference type="PIR" id="S63355">
    <property type="entry name" value="S63355"/>
</dbReference>
<dbReference type="RefSeq" id="NP_014421.3">
    <property type="nucleotide sequence ID" value="NM_001183201.3"/>
</dbReference>
<dbReference type="PDB" id="5OKZ">
    <property type="method" value="X-ray"/>
    <property type="resolution" value="3.20 A"/>
    <property type="chains" value="J/T/d/n=1-186"/>
</dbReference>
<dbReference type="PDB" id="5VZJ">
    <property type="method" value="X-ray"/>
    <property type="resolution" value="3.30 A"/>
    <property type="chains" value="L=81-120"/>
</dbReference>
<dbReference type="PDB" id="6FSZ">
    <property type="method" value="EM"/>
    <property type="resolution" value="4.60 A"/>
    <property type="chains" value="NN=90-118"/>
</dbReference>
<dbReference type="PDB" id="6LQS">
    <property type="method" value="EM"/>
    <property type="resolution" value="3.80 A"/>
    <property type="chains" value="M6=1-186"/>
</dbReference>
<dbReference type="PDB" id="7D4I">
    <property type="method" value="EM"/>
    <property type="resolution" value="4.00 A"/>
    <property type="chains" value="M6=1-186"/>
</dbReference>
<dbReference type="PDBsum" id="5OKZ"/>
<dbReference type="PDBsum" id="5VZJ"/>
<dbReference type="PDBsum" id="6FSZ"/>
<dbReference type="PDBsum" id="6LQS"/>
<dbReference type="PDBsum" id="7D4I"/>
<dbReference type="EMDB" id="EMD-0952"/>
<dbReference type="EMDB" id="EMD-30574"/>
<dbReference type="EMDB" id="EMD-4301"/>
<dbReference type="SMR" id="P53725"/>
<dbReference type="BioGRID" id="35849">
    <property type="interactions" value="117"/>
</dbReference>
<dbReference type="DIP" id="DIP-4263N"/>
<dbReference type="FunCoup" id="P53725">
    <property type="interactions" value="210"/>
</dbReference>
<dbReference type="IntAct" id="P53725">
    <property type="interactions" value="32"/>
</dbReference>
<dbReference type="MINT" id="P53725"/>
<dbReference type="STRING" id="4932.YNR024W"/>
<dbReference type="iPTMnet" id="P53725"/>
<dbReference type="PaxDb" id="4932-YNR024W"/>
<dbReference type="PeptideAtlas" id="P53725"/>
<dbReference type="EnsemblFungi" id="YNR024W_mRNA">
    <property type="protein sequence ID" value="YNR024W"/>
    <property type="gene ID" value="YNR024W"/>
</dbReference>
<dbReference type="GeneID" id="855758"/>
<dbReference type="KEGG" id="sce:YNR024W"/>
<dbReference type="AGR" id="SGD:S000005307"/>
<dbReference type="SGD" id="S000005307">
    <property type="gene designation" value="MPP6"/>
</dbReference>
<dbReference type="VEuPathDB" id="FungiDB:YNR024W"/>
<dbReference type="eggNOG" id="ENOG502SFA3">
    <property type="taxonomic scope" value="Eukaryota"/>
</dbReference>
<dbReference type="HOGENOM" id="CLU_132767_0_0_1"/>
<dbReference type="InParanoid" id="P53725"/>
<dbReference type="OMA" id="FRDNSEW"/>
<dbReference type="OrthoDB" id="4084022at2759"/>
<dbReference type="BioCyc" id="YEAST:G3O-33338-MONOMER"/>
<dbReference type="BioGRID-ORCS" id="855758">
    <property type="hits" value="0 hits in 10 CRISPR screens"/>
</dbReference>
<dbReference type="PRO" id="PR:P53725"/>
<dbReference type="Proteomes" id="UP000002311">
    <property type="component" value="Chromosome XIV"/>
</dbReference>
<dbReference type="RNAct" id="P53725">
    <property type="molecule type" value="protein"/>
</dbReference>
<dbReference type="GO" id="GO:0005829">
    <property type="term" value="C:cytosol"/>
    <property type="evidence" value="ECO:0000314"/>
    <property type="project" value="SGD"/>
</dbReference>
<dbReference type="GO" id="GO:0005634">
    <property type="term" value="C:nucleus"/>
    <property type="evidence" value="ECO:0000314"/>
    <property type="project" value="SGD"/>
</dbReference>
<dbReference type="GO" id="GO:0008266">
    <property type="term" value="F:poly(U) RNA binding"/>
    <property type="evidence" value="ECO:0000314"/>
    <property type="project" value="SGD"/>
</dbReference>
<dbReference type="GO" id="GO:0044877">
    <property type="term" value="F:protein-containing complex binding"/>
    <property type="evidence" value="ECO:0000314"/>
    <property type="project" value="SGD"/>
</dbReference>
<dbReference type="GO" id="GO:0000467">
    <property type="term" value="P:exonucleolytic trimming to generate mature 3'-end of 5.8S rRNA from tricistronic rRNA transcript (SSU-rRNA, 5.8S rRNA, LSU-rRNA)"/>
    <property type="evidence" value="ECO:0000315"/>
    <property type="project" value="SGD"/>
</dbReference>
<dbReference type="GO" id="GO:0071031">
    <property type="term" value="P:nuclear mRNA surveillance of mRNA 3'-end processing"/>
    <property type="evidence" value="ECO:0000316"/>
    <property type="project" value="SGD"/>
</dbReference>
<dbReference type="GO" id="GO:0071030">
    <property type="term" value="P:nuclear mRNA surveillance of spliceosomal pre-mRNA splicing"/>
    <property type="evidence" value="ECO:0000316"/>
    <property type="project" value="SGD"/>
</dbReference>
<dbReference type="GO" id="GO:0071039">
    <property type="term" value="P:nuclear polyadenylation-dependent CUT catabolic process"/>
    <property type="evidence" value="ECO:0000315"/>
    <property type="project" value="SGD"/>
</dbReference>
<dbReference type="GO" id="GO:0071035">
    <property type="term" value="P:nuclear polyadenylation-dependent rRNA catabolic process"/>
    <property type="evidence" value="ECO:0000316"/>
    <property type="project" value="SGD"/>
</dbReference>
<dbReference type="Pfam" id="PF10175">
    <property type="entry name" value="MPP6"/>
    <property type="match status" value="1"/>
</dbReference>
<comment type="function">
    <text evidence="1 6">RNA-binding protein that associates with the RNA exosome complex (By similarity). Involved in surveillance of pre-rRNAs and pre-mRNAs, and the degradation of cryptic non-coding RNAs (ncRNA) derived from intergenic regions and the ribosomal DNA spacer heterochromatin (PubMed:18591258).</text>
</comment>
<comment type="subunit">
    <text evidence="1">Associates with the RNA exosome complex.</text>
</comment>
<comment type="subcellular location">
    <subcellularLocation>
        <location evidence="3 5 6 7">Nucleus</location>
    </subcellularLocation>
    <text>Colocalizes with the nuclear exosome and ribosomes.</text>
</comment>
<comment type="disruption phenotype">
    <text evidence="6">Lethal in combination with the absence of either RRP6 or its cofactor RRP47. Weak but detectable stabilization of unspliced pre-mRNAs, and stronger stabilization is detected for mRNAs with defects in 3' cleavage and polyadenylation.</text>
</comment>
<comment type="miscellaneous">
    <text evidence="4">Present with 1350 molecules/cell in log phase SD medium.</text>
</comment>
<comment type="similarity">
    <text evidence="8">Belongs to the MPP6 family.</text>
</comment>
<gene>
    <name type="primary">MPP6</name>
    <name type="ordered locus">YNR024W</name>
    <name type="ORF">N3230</name>
</gene>
<accession>P53725</accession>
<accession>D6W1J9</accession>
<protein>
    <recommendedName>
        <fullName>M-phase phosphoprotein 6 homolog</fullName>
    </recommendedName>
    <alternativeName>
        <fullName>Exosome-associated RNA-binding protein MPP6</fullName>
    </alternativeName>
</protein>
<reference key="1">
    <citation type="journal article" date="1997" name="Nature">
        <title>The nucleotide sequence of Saccharomyces cerevisiae chromosome XIV and its evolutionary implications.</title>
        <authorList>
            <person name="Philippsen P."/>
            <person name="Kleine K."/>
            <person name="Poehlmann R."/>
            <person name="Duesterhoeft A."/>
            <person name="Hamberg K."/>
            <person name="Hegemann J.H."/>
            <person name="Obermaier B."/>
            <person name="Urrestarazu L.A."/>
            <person name="Aert R."/>
            <person name="Albermann K."/>
            <person name="Altmann R."/>
            <person name="Andre B."/>
            <person name="Baladron V."/>
            <person name="Ballesta J.P.G."/>
            <person name="Becam A.-M."/>
            <person name="Beinhauer J.D."/>
            <person name="Boskovic J."/>
            <person name="Buitrago M.J."/>
            <person name="Bussereau F."/>
            <person name="Coster F."/>
            <person name="Crouzet M."/>
            <person name="D'Angelo M."/>
            <person name="Dal Pero F."/>
            <person name="De Antoni A."/>
            <person name="del Rey F."/>
            <person name="Doignon F."/>
            <person name="Domdey H."/>
            <person name="Dubois E."/>
            <person name="Fiedler T.A."/>
            <person name="Fleig U."/>
            <person name="Floeth M."/>
            <person name="Fritz C."/>
            <person name="Gaillardin C."/>
            <person name="Garcia-Cantalejo J.M."/>
            <person name="Glansdorff N."/>
            <person name="Goffeau A."/>
            <person name="Gueldener U."/>
            <person name="Herbert C.J."/>
            <person name="Heumann K."/>
            <person name="Heuss-Neitzel D."/>
            <person name="Hilbert H."/>
            <person name="Hinni K."/>
            <person name="Iraqui Houssaini I."/>
            <person name="Jacquet M."/>
            <person name="Jimenez A."/>
            <person name="Jonniaux J.-L."/>
            <person name="Karpfinger-Hartl L."/>
            <person name="Lanfranchi G."/>
            <person name="Lepingle A."/>
            <person name="Levesque H."/>
            <person name="Lyck R."/>
            <person name="Maftahi M."/>
            <person name="Mallet L."/>
            <person name="Maurer C.T.C."/>
            <person name="Messenguy F."/>
            <person name="Mewes H.-W."/>
            <person name="Moestl D."/>
            <person name="Nasr F."/>
            <person name="Nicaud J.-M."/>
            <person name="Niedenthal R.K."/>
            <person name="Pandolfo D."/>
            <person name="Pierard A."/>
            <person name="Piravandi E."/>
            <person name="Planta R.J."/>
            <person name="Pohl T.M."/>
            <person name="Purnelle B."/>
            <person name="Rebischung C."/>
            <person name="Remacha M.A."/>
            <person name="Revuelta J.L."/>
            <person name="Rinke M."/>
            <person name="Saiz J.E."/>
            <person name="Sartorello F."/>
            <person name="Scherens B."/>
            <person name="Sen-Gupta M."/>
            <person name="Soler-Mira A."/>
            <person name="Urbanus J.H.M."/>
            <person name="Valle G."/>
            <person name="Van Dyck L."/>
            <person name="Verhasselt P."/>
            <person name="Vierendeels F."/>
            <person name="Vissers S."/>
            <person name="Voet M."/>
            <person name="Volckaert G."/>
            <person name="Wach A."/>
            <person name="Wambutt R."/>
            <person name="Wedler H."/>
            <person name="Zollner A."/>
            <person name="Hani J."/>
        </authorList>
    </citation>
    <scope>NUCLEOTIDE SEQUENCE [LARGE SCALE GENOMIC DNA]</scope>
    <source>
        <strain>ATCC 204508 / S288c</strain>
    </source>
</reference>
<reference key="2">
    <citation type="journal article" date="2014" name="G3 (Bethesda)">
        <title>The reference genome sequence of Saccharomyces cerevisiae: Then and now.</title>
        <authorList>
            <person name="Engel S.R."/>
            <person name="Dietrich F.S."/>
            <person name="Fisk D.G."/>
            <person name="Binkley G."/>
            <person name="Balakrishnan R."/>
            <person name="Costanzo M.C."/>
            <person name="Dwight S.S."/>
            <person name="Hitz B.C."/>
            <person name="Karra K."/>
            <person name="Nash R.S."/>
            <person name="Weng S."/>
            <person name="Wong E.D."/>
            <person name="Lloyd P."/>
            <person name="Skrzypek M.S."/>
            <person name="Miyasato S.R."/>
            <person name="Simison M."/>
            <person name="Cherry J.M."/>
        </authorList>
    </citation>
    <scope>GENOME REANNOTATION</scope>
    <source>
        <strain>ATCC 204508 / S288c</strain>
    </source>
</reference>
<reference key="3">
    <citation type="journal article" date="2003" name="Nature">
        <title>Global analysis of protein localization in budding yeast.</title>
        <authorList>
            <person name="Huh W.-K."/>
            <person name="Falvo J.V."/>
            <person name="Gerke L.C."/>
            <person name="Carroll A.S."/>
            <person name="Howson R.W."/>
            <person name="Weissman J.S."/>
            <person name="O'Shea E.K."/>
        </authorList>
    </citation>
    <scope>SUBCELLULAR LOCATION [LARGE SCALE ANALYSIS]</scope>
</reference>
<reference key="4">
    <citation type="journal article" date="2003" name="Nature">
        <title>Global analysis of protein expression in yeast.</title>
        <authorList>
            <person name="Ghaemmaghami S."/>
            <person name="Huh W.-K."/>
            <person name="Bower K."/>
            <person name="Howson R.W."/>
            <person name="Belle A."/>
            <person name="Dephoure N."/>
            <person name="O'Shea E.K."/>
            <person name="Weissman J.S."/>
        </authorList>
    </citation>
    <scope>LEVEL OF PROTEIN EXPRESSION [LARGE SCALE ANALYSIS]</scope>
</reference>
<reference key="5">
    <citation type="journal article" date="2006" name="Genes Dev.">
        <title>Systematic identification and functional screens of uncharacterized proteins associated with eukaryotic ribosomal complexes.</title>
        <authorList>
            <person name="Fleischer T.C."/>
            <person name="Weaver C.M."/>
            <person name="McAfee K.J."/>
            <person name="Jennings J.L."/>
            <person name="Link A.J."/>
        </authorList>
    </citation>
    <scope>SUBCELLULAR LOCATION</scope>
</reference>
<reference key="6">
    <citation type="journal article" date="2007" name="J. Proteome Res.">
        <title>Large-scale phosphorylation analysis of alpha-factor-arrested Saccharomyces cerevisiae.</title>
        <authorList>
            <person name="Li X."/>
            <person name="Gerber S.A."/>
            <person name="Rudner A.D."/>
            <person name="Beausoleil S.A."/>
            <person name="Haas W."/>
            <person name="Villen J."/>
            <person name="Elias J.E."/>
            <person name="Gygi S.P."/>
        </authorList>
    </citation>
    <scope>IDENTIFICATION BY MASS SPECTROMETRY [LARGE SCALE ANALYSIS]</scope>
    <source>
        <strain>ADR376</strain>
    </source>
</reference>
<reference key="7">
    <citation type="journal article" date="2008" name="Mol. Cell. Biol.">
        <title>A yeast exosome cofactor, Mpp6, functions in RNA surveillance and in the degradation of noncoding RNA transcripts.</title>
        <authorList>
            <person name="Milligan L."/>
            <person name="Decourty L."/>
            <person name="Saveanu C."/>
            <person name="Rappsilber J."/>
            <person name="Ceulemans H."/>
            <person name="Jacquier A."/>
            <person name="Tollervey D."/>
        </authorList>
    </citation>
    <scope>FUNCTION</scope>
    <scope>RNA-BINDING</scope>
    <scope>SUBCELLULAR LOCATION</scope>
    <scope>DISRUPTION PHENOTYPE</scope>
    <scope>IDENTIFICATION BY MASS SPECTROMETRY</scope>
</reference>
<reference key="8">
    <citation type="journal article" date="2008" name="Mol. Cell. Proteomics">
        <title>A multidimensional chromatography technology for in-depth phosphoproteome analysis.</title>
        <authorList>
            <person name="Albuquerque C.P."/>
            <person name="Smolka M.B."/>
            <person name="Payne S.H."/>
            <person name="Bafna V."/>
            <person name="Eng J."/>
            <person name="Zhou H."/>
        </authorList>
    </citation>
    <scope>PHOSPHORYLATION [LARGE SCALE ANALYSIS] AT SER-42 AND SER-150</scope>
    <scope>IDENTIFICATION BY MASS SPECTROMETRY [LARGE SCALE ANALYSIS]</scope>
</reference>
<reference key="9">
    <citation type="journal article" date="2009" name="J. Mol. Biol.">
        <title>Comparative multiplexed mass spectrometric analyses of endogenously expressed yeast nuclear and cytoplasmic exosomes.</title>
        <authorList>
            <person name="Synowsky S.A."/>
            <person name="van Wijk M."/>
            <person name="Raijmakers R."/>
            <person name="Heck A.J."/>
        </authorList>
    </citation>
    <scope>SUBCELLULAR LOCATION</scope>
    <scope>IDENTIFICATION BY MASS SPECTROMETRY</scope>
</reference>
<reference key="10">
    <citation type="journal article" date="2009" name="Science">
        <title>Global analysis of Cdk1 substrate phosphorylation sites provides insights into evolution.</title>
        <authorList>
            <person name="Holt L.J."/>
            <person name="Tuch B.B."/>
            <person name="Villen J."/>
            <person name="Johnson A.D."/>
            <person name="Gygi S.P."/>
            <person name="Morgan D.O."/>
        </authorList>
    </citation>
    <scope>IDENTIFICATION BY MASS SPECTROMETRY [LARGE SCALE ANALYSIS]</scope>
</reference>
<reference key="11">
    <citation type="journal article" date="2012" name="Proc. Natl. Acad. Sci. U.S.A.">
        <title>N-terminal acetylome analyses and functional insights of the N-terminal acetyltransferase NatB.</title>
        <authorList>
            <person name="Van Damme P."/>
            <person name="Lasa M."/>
            <person name="Polevoda B."/>
            <person name="Gazquez C."/>
            <person name="Elosegui-Artola A."/>
            <person name="Kim D.S."/>
            <person name="De Juan-Pardo E."/>
            <person name="Demeyer K."/>
            <person name="Hole K."/>
            <person name="Larrea E."/>
            <person name="Timmerman E."/>
            <person name="Prieto J."/>
            <person name="Arnesen T."/>
            <person name="Sherman F."/>
            <person name="Gevaert K."/>
            <person name="Aldabe R."/>
        </authorList>
    </citation>
    <scope>ACETYLATION [LARGE SCALE ANALYSIS] AT SER-2</scope>
    <scope>CLEAVAGE OF INITIATOR METHIONINE [LARGE SCALE ANALYSIS]</scope>
    <scope>IDENTIFICATION BY MASS SPECTROMETRY [LARGE SCALE ANALYSIS]</scope>
</reference>
<proteinExistence type="evidence at protein level"/>